<organism>
    <name type="scientific">Mus musculus</name>
    <name type="common">Mouse</name>
    <dbReference type="NCBI Taxonomy" id="10090"/>
    <lineage>
        <taxon>Eukaryota</taxon>
        <taxon>Metazoa</taxon>
        <taxon>Chordata</taxon>
        <taxon>Craniata</taxon>
        <taxon>Vertebrata</taxon>
        <taxon>Euteleostomi</taxon>
        <taxon>Mammalia</taxon>
        <taxon>Eutheria</taxon>
        <taxon>Euarchontoglires</taxon>
        <taxon>Glires</taxon>
        <taxon>Rodentia</taxon>
        <taxon>Myomorpha</taxon>
        <taxon>Muroidea</taxon>
        <taxon>Muridae</taxon>
        <taxon>Murinae</taxon>
        <taxon>Mus</taxon>
        <taxon>Mus</taxon>
    </lineage>
</organism>
<comment type="function">
    <text evidence="1">Gustducin-coupled receptor for denatonium and N(6)-propyl-2-thiouracil implicated in the perception of bitter compounds in the oral cavity and the gastrointestinal tract. Signals through PLCB2 and the calcium-regulated cation channel TRPM5. In airway epithelial cells, binding of denatonium increases the intracellular calcium ion concentration and stimulates ciliary beat frequency (By similarity).</text>
</comment>
<comment type="subcellular location">
    <subcellularLocation>
        <location>Membrane</location>
        <topology>Multi-pass membrane protein</topology>
    </subcellularLocation>
    <subcellularLocation>
        <location>Cell projection</location>
        <location>Cilium membrane</location>
    </subcellularLocation>
    <text evidence="1">In airway epithelial cells, localizes to motile cilia.</text>
</comment>
<comment type="tissue specificity">
    <text>Expressed in subsets of taste receptor cells of the tongue and palate epithelium and exclusively in gustducin-positive cells. Expressed in 15% taste bud cells in circumvallate and foliate papillae but only in 2% in fungiform papillae.</text>
</comment>
<comment type="miscellaneous">
    <text>Several bitter taste receptors are expressed in a single taste receptor cell.</text>
</comment>
<comment type="similarity">
    <text evidence="3">Belongs to the G-protein coupled receptor T2R family.</text>
</comment>
<accession>Q9JKT3</accession>
<accession>Q53Z44</accession>
<gene>
    <name type="primary">Tas2r4</name>
    <name type="synonym">Tas2r108</name>
    <name type="synonym">Tas2r8</name>
</gene>
<evidence type="ECO:0000250" key="1"/>
<evidence type="ECO:0000255" key="2"/>
<evidence type="ECO:0000305" key="3"/>
<proteinExistence type="evidence at protein level"/>
<dbReference type="EMBL" id="AF227148">
    <property type="protein sequence ID" value="AAF43921.1"/>
    <property type="molecule type" value="Genomic_DNA"/>
</dbReference>
<dbReference type="EMBL" id="AY916507">
    <property type="protein sequence ID" value="AAX99130.1"/>
    <property type="molecule type" value="mRNA"/>
</dbReference>
<dbReference type="EMBL" id="AY364474">
    <property type="protein sequence ID" value="AAQ93083.1"/>
    <property type="molecule type" value="Genomic_DNA"/>
</dbReference>
<dbReference type="EMBL" id="AY364475">
    <property type="protein sequence ID" value="AAQ93084.1"/>
    <property type="molecule type" value="Genomic_DNA"/>
</dbReference>
<dbReference type="EMBL" id="BC116952">
    <property type="protein sequence ID" value="AAI16953.1"/>
    <property type="molecule type" value="mRNA"/>
</dbReference>
<dbReference type="CCDS" id="CCDS20032.1"/>
<dbReference type="RefSeq" id="NP_065248.1">
    <property type="nucleotide sequence ID" value="NM_020502.1"/>
</dbReference>
<dbReference type="SMR" id="Q9JKT3"/>
<dbReference type="BioGRID" id="208223">
    <property type="interactions" value="1"/>
</dbReference>
<dbReference type="FunCoup" id="Q9JKT3">
    <property type="interactions" value="124"/>
</dbReference>
<dbReference type="STRING" id="10090.ENSMUSP00000044089"/>
<dbReference type="GlyCosmos" id="Q9JKT3">
    <property type="glycosylation" value="1 site, No reported glycans"/>
</dbReference>
<dbReference type="GlyGen" id="Q9JKT3">
    <property type="glycosylation" value="1 site"/>
</dbReference>
<dbReference type="PaxDb" id="10090-ENSMUSP00000044089"/>
<dbReference type="Antibodypedia" id="32508">
    <property type="antibodies" value="41 antibodies from 16 providers"/>
</dbReference>
<dbReference type="DNASU" id="57253"/>
<dbReference type="Ensembl" id="ENSMUST00000038750.7">
    <property type="protein sequence ID" value="ENSMUSP00000044089.6"/>
    <property type="gene ID" value="ENSMUSG00000037140.7"/>
</dbReference>
<dbReference type="GeneID" id="57253"/>
<dbReference type="KEGG" id="mmu:57253"/>
<dbReference type="UCSC" id="uc009bmw.1">
    <property type="organism name" value="mouse"/>
</dbReference>
<dbReference type="AGR" id="MGI:2681210"/>
<dbReference type="CTD" id="57253"/>
<dbReference type="MGI" id="MGI:2681210">
    <property type="gene designation" value="Tas2r108"/>
</dbReference>
<dbReference type="VEuPathDB" id="HostDB:ENSMUSG00000037140"/>
<dbReference type="eggNOG" id="ENOG502S2SI">
    <property type="taxonomic scope" value="Eukaryota"/>
</dbReference>
<dbReference type="GeneTree" id="ENSGT01100000263477"/>
<dbReference type="HOGENOM" id="CLU_072337_3_0_1"/>
<dbReference type="InParanoid" id="Q9JKT3"/>
<dbReference type="OMA" id="MKLMIYF"/>
<dbReference type="OrthoDB" id="9449902at2759"/>
<dbReference type="PhylomeDB" id="Q9JKT3"/>
<dbReference type="TreeFam" id="TF335891"/>
<dbReference type="Reactome" id="R-MMU-418594">
    <property type="pathway name" value="G alpha (i) signalling events"/>
</dbReference>
<dbReference type="Reactome" id="R-MMU-420499">
    <property type="pathway name" value="Class C/3 (Metabotropic glutamate/pheromone receptors)"/>
</dbReference>
<dbReference type="Reactome" id="R-MMU-9717207">
    <property type="pathway name" value="Sensory perception of sweet, bitter, and umami (glutamate) taste"/>
</dbReference>
<dbReference type="BioGRID-ORCS" id="57253">
    <property type="hits" value="3 hits in 78 CRISPR screens"/>
</dbReference>
<dbReference type="PRO" id="PR:Q9JKT3"/>
<dbReference type="Proteomes" id="UP000000589">
    <property type="component" value="Chromosome 6"/>
</dbReference>
<dbReference type="RNAct" id="Q9JKT3">
    <property type="molecule type" value="protein"/>
</dbReference>
<dbReference type="Bgee" id="ENSMUSG00000037140">
    <property type="expression patterns" value="Expressed in mesodermal cell in embryo and 1 other cell type or tissue"/>
</dbReference>
<dbReference type="GO" id="GO:0060170">
    <property type="term" value="C:ciliary membrane"/>
    <property type="evidence" value="ECO:0007669"/>
    <property type="project" value="UniProtKB-SubCell"/>
</dbReference>
<dbReference type="GO" id="GO:0033038">
    <property type="term" value="F:bitter taste receptor activity"/>
    <property type="evidence" value="ECO:0007669"/>
    <property type="project" value="Ensembl"/>
</dbReference>
<dbReference type="GO" id="GO:0004930">
    <property type="term" value="F:G protein-coupled receptor activity"/>
    <property type="evidence" value="ECO:0007669"/>
    <property type="project" value="UniProtKB-KW"/>
</dbReference>
<dbReference type="GO" id="GO:0008527">
    <property type="term" value="F:taste receptor activity"/>
    <property type="evidence" value="ECO:0000304"/>
    <property type="project" value="UniProtKB"/>
</dbReference>
<dbReference type="GO" id="GO:0001580">
    <property type="term" value="P:detection of chemical stimulus involved in sensory perception of bitter taste"/>
    <property type="evidence" value="ECO:0000247"/>
    <property type="project" value="MGI"/>
</dbReference>
<dbReference type="GO" id="GO:0007585">
    <property type="term" value="P:respiratory gaseous exchange by respiratory system"/>
    <property type="evidence" value="ECO:0000315"/>
    <property type="project" value="MGI"/>
</dbReference>
<dbReference type="CDD" id="cd15013">
    <property type="entry name" value="7tm_TAS2R4"/>
    <property type="match status" value="1"/>
</dbReference>
<dbReference type="FunFam" id="1.20.1070.10:FF:000055">
    <property type="entry name" value="Taste receptor type 2"/>
    <property type="match status" value="1"/>
</dbReference>
<dbReference type="Gene3D" id="1.20.1070.10">
    <property type="entry name" value="Rhodopsin 7-helix transmembrane proteins"/>
    <property type="match status" value="1"/>
</dbReference>
<dbReference type="InterPro" id="IPR007960">
    <property type="entry name" value="TAS2R"/>
</dbReference>
<dbReference type="InterPro" id="IPR030055">
    <property type="entry name" value="TAS2R4"/>
</dbReference>
<dbReference type="PANTHER" id="PTHR11394">
    <property type="entry name" value="TASTE RECEPTOR TYPE 2"/>
    <property type="match status" value="1"/>
</dbReference>
<dbReference type="PANTHER" id="PTHR11394:SF55">
    <property type="entry name" value="TASTE RECEPTOR TYPE 2 MEMBER 4"/>
    <property type="match status" value="1"/>
</dbReference>
<dbReference type="Pfam" id="PF05296">
    <property type="entry name" value="TAS2R"/>
    <property type="match status" value="1"/>
</dbReference>
<dbReference type="SUPFAM" id="SSF81321">
    <property type="entry name" value="Family A G protein-coupled receptor-like"/>
    <property type="match status" value="1"/>
</dbReference>
<protein>
    <recommendedName>
        <fullName>Taste receptor type 2 member 4</fullName>
        <shortName>T2R4</shortName>
    </recommendedName>
    <alternativeName>
        <fullName>Taste receptor type 2 member 8</fullName>
        <shortName>T2R8</shortName>
    </alternativeName>
</protein>
<sequence>MLWELYVFVFAASVFLNFVGIIANLFIIVIIIKTWVNSRRIASPDRILFSLAITRFLTLGLFLLNSVYIATNTGRSVYFSTFFLLCWKFLDANSLWLVTILNSLYCVKITNFQHPVFLLLKRTISMKTTSLLLACLLISALTTLLYYMLSQISRFPEHIIGRNDTSFDLSDGILTLVASLVLNSLLQFMLNVTFASLLIHSLRRHIQKMQRNRTSFWNPQTEAHMGAMRLMICFLVLYIPYSIATLLYLPSYMRKNLRAQAICMIITAAYPPGHSVLLIITHHKLKAKAKKIFCFYK</sequence>
<keyword id="KW-1003">Cell membrane</keyword>
<keyword id="KW-0966">Cell projection</keyword>
<keyword id="KW-0969">Cilium</keyword>
<keyword id="KW-0297">G-protein coupled receptor</keyword>
<keyword id="KW-0325">Glycoprotein</keyword>
<keyword id="KW-0472">Membrane</keyword>
<keyword id="KW-0675">Receptor</keyword>
<keyword id="KW-1185">Reference proteome</keyword>
<keyword id="KW-0716">Sensory transduction</keyword>
<keyword id="KW-0919">Taste</keyword>
<keyword id="KW-0807">Transducer</keyword>
<keyword id="KW-0812">Transmembrane</keyword>
<keyword id="KW-1133">Transmembrane helix</keyword>
<name>TA2R4_MOUSE</name>
<reference key="1">
    <citation type="journal article" date="2000" name="Cell">
        <title>A novel family of mammalian taste receptors.</title>
        <authorList>
            <person name="Adler E."/>
            <person name="Hoon M.A."/>
            <person name="Mueller K.L."/>
            <person name="Chandrashekar J."/>
            <person name="Ryba N.J.P."/>
            <person name="Zuker C.S."/>
        </authorList>
    </citation>
    <scope>NUCLEOTIDE SEQUENCE [GENOMIC DNA]</scope>
    <scope>TOPOLOGY</scope>
    <source>
        <strain>129/SvJ</strain>
    </source>
</reference>
<reference key="2">
    <citation type="journal article" date="2005" name="Physiol. Genomics">
        <title>Genomic organization, expression, and function of bitter taste receptors (T2R) in mouse and rat.</title>
        <authorList>
            <person name="Wu S.V."/>
            <person name="Chen M.C."/>
            <person name="Rozengurt E."/>
        </authorList>
    </citation>
    <scope>NUCLEOTIDE SEQUENCE [MRNA]</scope>
    <source>
        <strain>C57BL/6J</strain>
    </source>
</reference>
<reference key="3">
    <citation type="journal article" date="2003" name="Chem. Senses">
        <title>Taste sensitivities to PROP and PTC vary independently in mice.</title>
        <authorList>
            <person name="Nelson T.M."/>
            <person name="Munger S.D."/>
            <person name="Boughter J.D. Jr."/>
        </authorList>
    </citation>
    <scope>NUCLEOTIDE SEQUENCE [GENOMIC DNA]</scope>
    <source>
        <strain>C3Heb/FeJ</strain>
        <strain>SWR/J</strain>
    </source>
</reference>
<reference key="4">
    <citation type="journal article" date="2004" name="Genome Res.">
        <title>The status, quality, and expansion of the NIH full-length cDNA project: the Mammalian Gene Collection (MGC).</title>
        <authorList>
            <consortium name="The MGC Project Team"/>
        </authorList>
    </citation>
    <scope>NUCLEOTIDE SEQUENCE [LARGE SCALE MRNA]</scope>
</reference>
<reference key="5">
    <citation type="journal article" date="2000" name="Cell">
        <title>T2Rs function as bitter taste receptors.</title>
        <authorList>
            <person name="Chandrashekar J."/>
            <person name="Mueller K.L."/>
            <person name="Hoon M.A."/>
            <person name="Adler E."/>
            <person name="Feng L."/>
            <person name="Guo W."/>
            <person name="Zuker C.S."/>
            <person name="Ryba N.J.P."/>
        </authorList>
    </citation>
    <scope>CHARACTERIZATION</scope>
</reference>
<reference key="6">
    <citation type="journal article" date="2002" name="Curr. Opin. Neurobiol.">
        <title>Receptors for bitter and sweet taste.</title>
        <authorList>
            <person name="Montmayeur J.-P."/>
            <person name="Matsunami H."/>
        </authorList>
    </citation>
    <scope>REVIEW</scope>
</reference>
<reference key="7">
    <citation type="journal article" date="2002" name="J. Biol. Chem.">
        <title>Molecular mechanisms of bitter and sweet taste transduction.</title>
        <authorList>
            <person name="Margolskee R.F."/>
        </authorList>
    </citation>
    <scope>REVIEW</scope>
</reference>
<reference key="8">
    <citation type="journal article" date="2003" name="Cell">
        <title>Coding of sweet, bitter, and umami tastes: different receptor cells sharing similar signaling pathways.</title>
        <authorList>
            <person name="Zhang Y."/>
            <person name="Hoon M.A."/>
            <person name="Chandrashekar J."/>
            <person name="Mueller K.L."/>
            <person name="Cook B."/>
            <person name="Wu D."/>
            <person name="Zuker C.S."/>
            <person name="Ryba N.J."/>
        </authorList>
    </citation>
    <scope>REVIEW</scope>
</reference>
<feature type="chain" id="PRO_0000082210" description="Taste receptor type 2 member 4">
    <location>
        <begin position="1"/>
        <end position="297"/>
    </location>
</feature>
<feature type="topological domain" description="Extracellular" evidence="2">
    <location>
        <begin position="1"/>
        <end position="11"/>
    </location>
</feature>
<feature type="transmembrane region" description="Helical; Name=1" evidence="2">
    <location>
        <begin position="12"/>
        <end position="32"/>
    </location>
</feature>
<feature type="topological domain" description="Cytoplasmic" evidence="2">
    <location>
        <begin position="33"/>
        <end position="46"/>
    </location>
</feature>
<feature type="transmembrane region" description="Helical; Name=2" evidence="2">
    <location>
        <begin position="47"/>
        <end position="67"/>
    </location>
</feature>
<feature type="topological domain" description="Extracellular" evidence="2">
    <location>
        <begin position="68"/>
        <end position="80"/>
    </location>
</feature>
<feature type="transmembrane region" description="Helical; Name=3" evidence="2">
    <location>
        <begin position="81"/>
        <end position="101"/>
    </location>
</feature>
<feature type="topological domain" description="Cytoplasmic" evidence="2">
    <location>
        <begin position="102"/>
        <end position="128"/>
    </location>
</feature>
<feature type="transmembrane region" description="Helical; Name=4" evidence="2">
    <location>
        <begin position="129"/>
        <end position="149"/>
    </location>
</feature>
<feature type="topological domain" description="Extracellular" evidence="2">
    <location>
        <begin position="150"/>
        <end position="171"/>
    </location>
</feature>
<feature type="transmembrane region" description="Helical; Name=5" evidence="2">
    <location>
        <begin position="172"/>
        <end position="192"/>
    </location>
</feature>
<feature type="topological domain" description="Cytoplasmic" evidence="2">
    <location>
        <begin position="193"/>
        <end position="229"/>
    </location>
</feature>
<feature type="transmembrane region" description="Helical; Name=6" evidence="2">
    <location>
        <begin position="230"/>
        <end position="250"/>
    </location>
</feature>
<feature type="topological domain" description="Extracellular" evidence="2">
    <location>
        <begin position="251"/>
        <end position="260"/>
    </location>
</feature>
<feature type="transmembrane region" description="Helical; Name=7" evidence="2">
    <location>
        <begin position="261"/>
        <end position="281"/>
    </location>
</feature>
<feature type="topological domain" description="Cytoplasmic" evidence="2">
    <location>
        <begin position="282"/>
        <end position="297"/>
    </location>
</feature>
<feature type="glycosylation site" description="N-linked (GlcNAc...) asparagine" evidence="2">
    <location>
        <position position="163"/>
    </location>
</feature>